<dbReference type="EC" id="2.7.7.85" evidence="1"/>
<dbReference type="EMBL" id="CP000702">
    <property type="protein sequence ID" value="ABQ46744.1"/>
    <property type="molecule type" value="Genomic_DNA"/>
</dbReference>
<dbReference type="RefSeq" id="WP_048810863.1">
    <property type="nucleotide sequence ID" value="NC_009486.1"/>
</dbReference>
<dbReference type="SMR" id="A5IKM1"/>
<dbReference type="STRING" id="390874.Tpet_0724"/>
<dbReference type="KEGG" id="tpt:Tpet_0724"/>
<dbReference type="eggNOG" id="COG1623">
    <property type="taxonomic scope" value="Bacteria"/>
</dbReference>
<dbReference type="HOGENOM" id="CLU_787128_0_0_0"/>
<dbReference type="Proteomes" id="UP000006558">
    <property type="component" value="Chromosome"/>
</dbReference>
<dbReference type="GO" id="GO:0004016">
    <property type="term" value="F:adenylate cyclase activity"/>
    <property type="evidence" value="ECO:0007669"/>
    <property type="project" value="TreeGrafter"/>
</dbReference>
<dbReference type="GO" id="GO:0005524">
    <property type="term" value="F:ATP binding"/>
    <property type="evidence" value="ECO:0007669"/>
    <property type="project" value="UniProtKB-UniRule"/>
</dbReference>
<dbReference type="GO" id="GO:0140097">
    <property type="term" value="F:catalytic activity, acting on DNA"/>
    <property type="evidence" value="ECO:0007669"/>
    <property type="project" value="UniProtKB-ARBA"/>
</dbReference>
<dbReference type="GO" id="GO:0106408">
    <property type="term" value="F:diadenylate cyclase activity"/>
    <property type="evidence" value="ECO:0007669"/>
    <property type="project" value="UniProtKB-EC"/>
</dbReference>
<dbReference type="GO" id="GO:0003677">
    <property type="term" value="F:DNA binding"/>
    <property type="evidence" value="ECO:0007669"/>
    <property type="project" value="UniProtKB-UniRule"/>
</dbReference>
<dbReference type="GO" id="GO:0016787">
    <property type="term" value="F:hydrolase activity"/>
    <property type="evidence" value="ECO:0007669"/>
    <property type="project" value="UniProtKB-ARBA"/>
</dbReference>
<dbReference type="GO" id="GO:0006281">
    <property type="term" value="P:DNA repair"/>
    <property type="evidence" value="ECO:0007669"/>
    <property type="project" value="UniProtKB-UniRule"/>
</dbReference>
<dbReference type="FunFam" id="3.40.1700.10:FF:000001">
    <property type="entry name" value="DNA integrity scanning protein DisA"/>
    <property type="match status" value="1"/>
</dbReference>
<dbReference type="Gene3D" id="1.10.150.20">
    <property type="entry name" value="5' to 3' exonuclease, C-terminal subdomain"/>
    <property type="match status" value="1"/>
</dbReference>
<dbReference type="Gene3D" id="1.20.1260.110">
    <property type="entry name" value="DNA integrity scanning linker region"/>
    <property type="match status" value="1"/>
</dbReference>
<dbReference type="Gene3D" id="3.40.1700.10">
    <property type="entry name" value="DNA integrity scanning protein, DisA, N-terminal domain"/>
    <property type="match status" value="1"/>
</dbReference>
<dbReference type="HAMAP" id="MF_01438">
    <property type="entry name" value="DisA"/>
    <property type="match status" value="1"/>
</dbReference>
<dbReference type="InterPro" id="IPR050338">
    <property type="entry name" value="DisA"/>
</dbReference>
<dbReference type="InterPro" id="IPR038331">
    <property type="entry name" value="DisA_sf"/>
</dbReference>
<dbReference type="InterPro" id="IPR036888">
    <property type="entry name" value="DNA_integrity_DisA_N_sf"/>
</dbReference>
<dbReference type="InterPro" id="IPR018906">
    <property type="entry name" value="DNA_integrity_scan_DisA_link"/>
</dbReference>
<dbReference type="InterPro" id="IPR003390">
    <property type="entry name" value="DNA_integrity_scan_DisA_N"/>
</dbReference>
<dbReference type="InterPro" id="IPR023763">
    <property type="entry name" value="DNA_integrity_scanning_protein"/>
</dbReference>
<dbReference type="InterPro" id="IPR000445">
    <property type="entry name" value="HhH_motif"/>
</dbReference>
<dbReference type="InterPro" id="IPR010994">
    <property type="entry name" value="RuvA_2-like"/>
</dbReference>
<dbReference type="NCBIfam" id="NF010009">
    <property type="entry name" value="PRK13482.1"/>
    <property type="match status" value="1"/>
</dbReference>
<dbReference type="PANTHER" id="PTHR34185">
    <property type="entry name" value="DIADENYLATE CYCLASE"/>
    <property type="match status" value="1"/>
</dbReference>
<dbReference type="PANTHER" id="PTHR34185:SF3">
    <property type="entry name" value="DNA INTEGRITY SCANNING PROTEIN DISA"/>
    <property type="match status" value="1"/>
</dbReference>
<dbReference type="Pfam" id="PF02457">
    <property type="entry name" value="DAC"/>
    <property type="match status" value="1"/>
</dbReference>
<dbReference type="Pfam" id="PF10635">
    <property type="entry name" value="DisA-linker"/>
    <property type="match status" value="1"/>
</dbReference>
<dbReference type="Pfam" id="PF00633">
    <property type="entry name" value="HHH"/>
    <property type="match status" value="1"/>
</dbReference>
<dbReference type="SUPFAM" id="SSF47781">
    <property type="entry name" value="RuvA domain 2-like"/>
    <property type="match status" value="1"/>
</dbReference>
<dbReference type="SUPFAM" id="SSF143597">
    <property type="entry name" value="YojJ-like"/>
    <property type="match status" value="1"/>
</dbReference>
<dbReference type="PROSITE" id="PS51794">
    <property type="entry name" value="DAC"/>
    <property type="match status" value="1"/>
</dbReference>
<name>DISA_THEP1</name>
<feature type="chain" id="PRO_1000145865" description="DNA integrity scanning protein DisA">
    <location>
        <begin position="1"/>
        <end position="352"/>
    </location>
</feature>
<feature type="domain" description="DAC" evidence="2">
    <location>
        <begin position="3"/>
        <end position="143"/>
    </location>
</feature>
<feature type="binding site" evidence="1">
    <location>
        <position position="71"/>
    </location>
    <ligand>
        <name>ATP</name>
        <dbReference type="ChEBI" id="CHEBI:30616"/>
    </ligand>
</feature>
<feature type="binding site" evidence="1">
    <location>
        <position position="89"/>
    </location>
    <ligand>
        <name>ATP</name>
        <dbReference type="ChEBI" id="CHEBI:30616"/>
    </ligand>
</feature>
<feature type="binding site" evidence="1">
    <location>
        <begin position="102"/>
        <end position="106"/>
    </location>
    <ligand>
        <name>ATP</name>
        <dbReference type="ChEBI" id="CHEBI:30616"/>
    </ligand>
</feature>
<organism>
    <name type="scientific">Thermotoga petrophila (strain ATCC BAA-488 / DSM 13995 / JCM 10881 / RKU-1)</name>
    <dbReference type="NCBI Taxonomy" id="390874"/>
    <lineage>
        <taxon>Bacteria</taxon>
        <taxon>Thermotogati</taxon>
        <taxon>Thermotogota</taxon>
        <taxon>Thermotogae</taxon>
        <taxon>Thermotogales</taxon>
        <taxon>Thermotogaceae</taxon>
        <taxon>Thermotoga</taxon>
    </lineage>
</organism>
<sequence length="352" mass="40001">MVPQELIEKIKLISPGTELRKALDDIINANFGALIFLVDDPKKYEDIIQGGFWLDTDFSAEKLYELSKMDGAIVLSEDITKIYYANVHLVPDPTIPTGETGTRHRTAERLAKQTGKVVIAVSRRRNIISLYYKNYKYVVNQVDFLISKVTQAISTLEKYKDNFNKLLSELEVLELENRVTLADVVRTLAKGFELLRIVEEIRPYIVELGEEGRLARMQLRELTEDVDDLLVLLVMDYSSEEVDEEAAQDIMQDFVKKRDPSPISISRALGYDVQQVAQLDDVLVSARGYRLLKTVARIPLSIGYNVVRMFKTLDQISKASVEDLKKVEGIGEKRARAISESISSLKHRKTSE</sequence>
<gene>
    <name evidence="1" type="primary">disA</name>
    <name type="ordered locus">Tpet_0724</name>
</gene>
<protein>
    <recommendedName>
        <fullName evidence="1">DNA integrity scanning protein DisA</fullName>
    </recommendedName>
    <alternativeName>
        <fullName evidence="1">Cyclic di-AMP synthase</fullName>
        <shortName evidence="1">c-di-AMP synthase</shortName>
    </alternativeName>
    <alternativeName>
        <fullName evidence="1">Diadenylate cyclase</fullName>
        <ecNumber evidence="1">2.7.7.85</ecNumber>
    </alternativeName>
</protein>
<keyword id="KW-0067">ATP-binding</keyword>
<keyword id="KW-0227">DNA damage</keyword>
<keyword id="KW-0234">DNA repair</keyword>
<keyword id="KW-0238">DNA-binding</keyword>
<keyword id="KW-0460">Magnesium</keyword>
<keyword id="KW-0547">Nucleotide-binding</keyword>
<keyword id="KW-0548">Nucleotidyltransferase</keyword>
<keyword id="KW-0808">Transferase</keyword>
<evidence type="ECO:0000255" key="1">
    <source>
        <dbReference type="HAMAP-Rule" id="MF_01438"/>
    </source>
</evidence>
<evidence type="ECO:0000255" key="2">
    <source>
        <dbReference type="PROSITE-ProRule" id="PRU01130"/>
    </source>
</evidence>
<comment type="function">
    <text evidence="1">Participates in a DNA-damage check-point. DisA forms globular foci that rapidly scan along the chromosomes searching for lesions.</text>
</comment>
<comment type="function">
    <text evidence="1">Also has diadenylate cyclase activity, catalyzing the condensation of 2 ATP molecules into cyclic di-AMP (c-di-AMP). c-di-AMP likely acts as a signaling molecule that may couple DNA integrity with a cellular process.</text>
</comment>
<comment type="catalytic activity">
    <reaction evidence="1">
        <text>2 ATP = 3',3'-c-di-AMP + 2 diphosphate</text>
        <dbReference type="Rhea" id="RHEA:35655"/>
        <dbReference type="ChEBI" id="CHEBI:30616"/>
        <dbReference type="ChEBI" id="CHEBI:33019"/>
        <dbReference type="ChEBI" id="CHEBI:71500"/>
        <dbReference type="EC" id="2.7.7.85"/>
    </reaction>
</comment>
<comment type="cofactor">
    <cofactor evidence="1">
        <name>Mg(2+)</name>
        <dbReference type="ChEBI" id="CHEBI:18420"/>
    </cofactor>
</comment>
<comment type="subunit">
    <text evidence="1">Homooctamer.</text>
</comment>
<comment type="similarity">
    <text evidence="1">Belongs to the DisA family.</text>
</comment>
<proteinExistence type="inferred from homology"/>
<reference key="1">
    <citation type="submission" date="2007-05" db="EMBL/GenBank/DDBJ databases">
        <title>Complete sequence of Thermotoga petrophila RKU-1.</title>
        <authorList>
            <consortium name="US DOE Joint Genome Institute"/>
            <person name="Copeland A."/>
            <person name="Lucas S."/>
            <person name="Lapidus A."/>
            <person name="Barry K."/>
            <person name="Glavina del Rio T."/>
            <person name="Dalin E."/>
            <person name="Tice H."/>
            <person name="Pitluck S."/>
            <person name="Sims D."/>
            <person name="Brettin T."/>
            <person name="Bruce D."/>
            <person name="Detter J.C."/>
            <person name="Han C."/>
            <person name="Tapia R."/>
            <person name="Schmutz J."/>
            <person name="Larimer F."/>
            <person name="Land M."/>
            <person name="Hauser L."/>
            <person name="Kyrpides N."/>
            <person name="Mikhailova N."/>
            <person name="Nelson K."/>
            <person name="Gogarten J.P."/>
            <person name="Noll K."/>
            <person name="Richardson P."/>
        </authorList>
    </citation>
    <scope>NUCLEOTIDE SEQUENCE [LARGE SCALE GENOMIC DNA]</scope>
    <source>
        <strain>ATCC BAA-488 / DSM 13995 / JCM 10881 / RKU-1</strain>
    </source>
</reference>
<accession>A5IKM1</accession>